<evidence type="ECO:0000250" key="1"/>
<evidence type="ECO:0000255" key="2">
    <source>
        <dbReference type="PROSITE-ProRule" id="PRU00366"/>
    </source>
</evidence>
<evidence type="ECO:0000256" key="3">
    <source>
        <dbReference type="SAM" id="MobiDB-lite"/>
    </source>
</evidence>
<evidence type="ECO:0000305" key="4"/>
<organism>
    <name type="scientific">Oryza sativa subsp. japonica</name>
    <name type="common">Rice</name>
    <dbReference type="NCBI Taxonomy" id="39947"/>
    <lineage>
        <taxon>Eukaryota</taxon>
        <taxon>Viridiplantae</taxon>
        <taxon>Streptophyta</taxon>
        <taxon>Embryophyta</taxon>
        <taxon>Tracheophyta</taxon>
        <taxon>Spermatophyta</taxon>
        <taxon>Magnoliopsida</taxon>
        <taxon>Liliopsida</taxon>
        <taxon>Poales</taxon>
        <taxon>Poaceae</taxon>
        <taxon>BOP clade</taxon>
        <taxon>Oryzoideae</taxon>
        <taxon>Oryzeae</taxon>
        <taxon>Oryzinae</taxon>
        <taxon>Oryza</taxon>
        <taxon>Oryza sativa</taxon>
    </lineage>
</organism>
<dbReference type="EMBL" id="AC135924">
    <property type="protein sequence ID" value="AAU44236.1"/>
    <property type="molecule type" value="Genomic_DNA"/>
</dbReference>
<dbReference type="EMBL" id="AP008211">
    <property type="protein sequence ID" value="BAF17734.2"/>
    <property type="molecule type" value="Genomic_DNA"/>
</dbReference>
<dbReference type="EMBL" id="AP014961">
    <property type="protein sequence ID" value="BAS94507.1"/>
    <property type="molecule type" value="Genomic_DNA"/>
</dbReference>
<dbReference type="EMBL" id="CM000142">
    <property type="protein sequence ID" value="EEE64063.1"/>
    <property type="molecule type" value="Genomic_DNA"/>
</dbReference>
<dbReference type="EMBL" id="AK102559">
    <property type="protein sequence ID" value="BAG95613.1"/>
    <property type="molecule type" value="mRNA"/>
</dbReference>
<dbReference type="RefSeq" id="XP_015638470.1">
    <property type="nucleotide sequence ID" value="XM_015782984.1"/>
</dbReference>
<dbReference type="RefSeq" id="XP_015638471.1">
    <property type="nucleotide sequence ID" value="XM_015782985.1"/>
</dbReference>
<dbReference type="SMR" id="Q65WX1"/>
<dbReference type="FunCoup" id="Q65WX1">
    <property type="interactions" value="771"/>
</dbReference>
<dbReference type="STRING" id="39947.Q65WX1"/>
<dbReference type="PaxDb" id="39947-Q65WX1"/>
<dbReference type="EnsemblPlants" id="Os05t0473300-01">
    <property type="protein sequence ID" value="Os05t0473300-01"/>
    <property type="gene ID" value="Os05g0473300"/>
</dbReference>
<dbReference type="EnsemblPlants" id="Os05t0473300-02">
    <property type="protein sequence ID" value="Os05t0473300-02"/>
    <property type="gene ID" value="Os05g0473300"/>
</dbReference>
<dbReference type="Gramene" id="Os05t0473300-01">
    <property type="protein sequence ID" value="Os05t0473300-01"/>
    <property type="gene ID" value="Os05g0473300"/>
</dbReference>
<dbReference type="Gramene" id="Os05t0473300-02">
    <property type="protein sequence ID" value="Os05t0473300-02"/>
    <property type="gene ID" value="Os05g0473300"/>
</dbReference>
<dbReference type="KEGG" id="dosa:Os05g0473300"/>
<dbReference type="eggNOG" id="ENOG502S427">
    <property type="taxonomic scope" value="Eukaryota"/>
</dbReference>
<dbReference type="HOGENOM" id="CLU_1167616_0_0_1"/>
<dbReference type="InParanoid" id="Q65WX1"/>
<dbReference type="OMA" id="NDIAMYI"/>
<dbReference type="OrthoDB" id="550883at2759"/>
<dbReference type="Proteomes" id="UP000000763">
    <property type="component" value="Chromosome 5"/>
</dbReference>
<dbReference type="Proteomes" id="UP000007752">
    <property type="component" value="Chromosome 5"/>
</dbReference>
<dbReference type="Proteomes" id="UP000059680">
    <property type="component" value="Chromosome 5"/>
</dbReference>
<dbReference type="GO" id="GO:0005634">
    <property type="term" value="C:nucleus"/>
    <property type="evidence" value="ECO:0000318"/>
    <property type="project" value="GO_Central"/>
</dbReference>
<dbReference type="GO" id="GO:0003700">
    <property type="term" value="F:DNA-binding transcription factor activity"/>
    <property type="evidence" value="ECO:0000318"/>
    <property type="project" value="GO_Central"/>
</dbReference>
<dbReference type="GO" id="GO:0000976">
    <property type="term" value="F:transcription cis-regulatory region binding"/>
    <property type="evidence" value="ECO:0000318"/>
    <property type="project" value="GO_Central"/>
</dbReference>
<dbReference type="GO" id="GO:0045893">
    <property type="term" value="P:positive regulation of DNA-templated transcription"/>
    <property type="evidence" value="ECO:0000318"/>
    <property type="project" value="GO_Central"/>
</dbReference>
<dbReference type="GO" id="GO:0006950">
    <property type="term" value="P:response to stress"/>
    <property type="evidence" value="ECO:0000318"/>
    <property type="project" value="GO_Central"/>
</dbReference>
<dbReference type="CDD" id="cd00018">
    <property type="entry name" value="AP2"/>
    <property type="match status" value="1"/>
</dbReference>
<dbReference type="FunFam" id="3.30.730.10:FF:000001">
    <property type="entry name" value="Ethylene-responsive transcription factor 2"/>
    <property type="match status" value="1"/>
</dbReference>
<dbReference type="Gene3D" id="3.30.730.10">
    <property type="entry name" value="AP2/ERF domain"/>
    <property type="match status" value="1"/>
</dbReference>
<dbReference type="InterPro" id="IPR001471">
    <property type="entry name" value="AP2/ERF_dom"/>
</dbReference>
<dbReference type="InterPro" id="IPR036955">
    <property type="entry name" value="AP2/ERF_dom_sf"/>
</dbReference>
<dbReference type="InterPro" id="IPR016177">
    <property type="entry name" value="DNA-bd_dom_sf"/>
</dbReference>
<dbReference type="PANTHER" id="PTHR31241">
    <property type="entry name" value="DEHYDRATION-RESPONSIVE ELEMENT-BINDING PROTEIN 2C"/>
    <property type="match status" value="1"/>
</dbReference>
<dbReference type="PANTHER" id="PTHR31241:SF62">
    <property type="entry name" value="DEHYDRATION-RESPONSIVE ELEMENT-BINDING PROTEIN 2D"/>
    <property type="match status" value="1"/>
</dbReference>
<dbReference type="Pfam" id="PF00847">
    <property type="entry name" value="AP2"/>
    <property type="match status" value="1"/>
</dbReference>
<dbReference type="PRINTS" id="PR00367">
    <property type="entry name" value="ETHRSPELEMNT"/>
</dbReference>
<dbReference type="SMART" id="SM00380">
    <property type="entry name" value="AP2"/>
    <property type="match status" value="1"/>
</dbReference>
<dbReference type="SUPFAM" id="SSF54171">
    <property type="entry name" value="DNA-binding domain"/>
    <property type="match status" value="1"/>
</dbReference>
<dbReference type="PROSITE" id="PS51032">
    <property type="entry name" value="AP2_ERF"/>
    <property type="match status" value="1"/>
</dbReference>
<feature type="chain" id="PRO_0000397870" description="Dehydration-responsive element-binding protein 2D">
    <location>
        <begin position="1"/>
        <end position="261"/>
    </location>
</feature>
<feature type="DNA-binding region" description="AP2/ERF" evidence="2">
    <location>
        <begin position="66"/>
        <end position="123"/>
    </location>
</feature>
<feature type="region of interest" description="Disordered" evidence="3">
    <location>
        <begin position="1"/>
        <end position="72"/>
    </location>
</feature>
<sequence>MAAGEGDVGMEVETKAPAMPPPPPASSSAARKKKQARAKNGDTPEPDAAGGARARASRRAKRGPGSYRGVRQRRWGKWVSEIREPNRGKRHWLGTFGSAVDAALAYDKAAASILGPRAVLNFPAFSPPAAAIAAPEQCEPPFCSPATTAAATAPEQRQTPGCSPAAVAGSGGGAVFEERDVKPVVLPLPLPAILQDGGGTEAMAQHWDWEWDASWPELEMFECLDDIAMYLDVDAVMTTRDCKVEELDADIVDSPLWTLSD</sequence>
<comment type="function">
    <text evidence="1">Probable transcriptional activator that binds to the DNA sequence 5'-[AG]CCGAC-3' of the cis-acting dehydration-responsive element (DRE).</text>
</comment>
<comment type="subcellular location">
    <subcellularLocation>
        <location evidence="4">Nucleus</location>
    </subcellularLocation>
</comment>
<comment type="similarity">
    <text evidence="4">Belongs to the AP2/ERF transcription factor family. ERF subfamily.</text>
</comment>
<name>DRE2D_ORYSJ</name>
<gene>
    <name type="primary">DREB2D</name>
    <name type="synonym">ERF43</name>
    <name type="ordered locus">Os05g0473300</name>
    <name type="ordered locus">LOC_Os05g39590</name>
    <name type="ORF">OsJ_18893</name>
    <name type="ORF">P0486C01.4</name>
</gene>
<keyword id="KW-0010">Activator</keyword>
<keyword id="KW-0238">DNA-binding</keyword>
<keyword id="KW-0539">Nucleus</keyword>
<keyword id="KW-1185">Reference proteome</keyword>
<keyword id="KW-0346">Stress response</keyword>
<keyword id="KW-0804">Transcription</keyword>
<keyword id="KW-0805">Transcription regulation</keyword>
<protein>
    <recommendedName>
        <fullName>Dehydration-responsive element-binding protein 2D</fullName>
        <shortName>OsDREB2D</shortName>
    </recommendedName>
</protein>
<accession>Q65WX1</accession>
<accession>A0A0P0WNI0</accession>
<accession>Q0DHD9</accession>
<proteinExistence type="evidence at transcript level"/>
<reference key="1">
    <citation type="journal article" date="2005" name="Mol. Genet. Genomics">
        <title>A fine physical map of the rice chromosome 5.</title>
        <authorList>
            <person name="Cheng C.-H."/>
            <person name="Chung M.C."/>
            <person name="Liu S.-M."/>
            <person name="Chen S.-K."/>
            <person name="Kao F.Y."/>
            <person name="Lin S.-J."/>
            <person name="Hsiao S.-H."/>
            <person name="Tseng I.C."/>
            <person name="Hsing Y.-I.C."/>
            <person name="Wu H.-P."/>
            <person name="Chen C.-S."/>
            <person name="Shaw J.-F."/>
            <person name="Wu J."/>
            <person name="Matsumoto T."/>
            <person name="Sasaki T."/>
            <person name="Chen H.-C."/>
            <person name="Chow T.-Y."/>
        </authorList>
    </citation>
    <scope>NUCLEOTIDE SEQUENCE [LARGE SCALE GENOMIC DNA]</scope>
    <source>
        <strain>cv. Nipponbare</strain>
    </source>
</reference>
<reference key="2">
    <citation type="journal article" date="2005" name="Nature">
        <title>The map-based sequence of the rice genome.</title>
        <authorList>
            <consortium name="International rice genome sequencing project (IRGSP)"/>
        </authorList>
    </citation>
    <scope>NUCLEOTIDE SEQUENCE [LARGE SCALE GENOMIC DNA]</scope>
    <source>
        <strain>cv. Nipponbare</strain>
    </source>
</reference>
<reference key="3">
    <citation type="journal article" date="2008" name="Nucleic Acids Res.">
        <title>The rice annotation project database (RAP-DB): 2008 update.</title>
        <authorList>
            <consortium name="The rice annotation project (RAP)"/>
        </authorList>
    </citation>
    <scope>GENOME REANNOTATION</scope>
    <source>
        <strain>cv. Nipponbare</strain>
    </source>
</reference>
<reference key="4">
    <citation type="journal article" date="2013" name="Rice">
        <title>Improvement of the Oryza sativa Nipponbare reference genome using next generation sequence and optical map data.</title>
        <authorList>
            <person name="Kawahara Y."/>
            <person name="de la Bastide M."/>
            <person name="Hamilton J.P."/>
            <person name="Kanamori H."/>
            <person name="McCombie W.R."/>
            <person name="Ouyang S."/>
            <person name="Schwartz D.C."/>
            <person name="Tanaka T."/>
            <person name="Wu J."/>
            <person name="Zhou S."/>
            <person name="Childs K.L."/>
            <person name="Davidson R.M."/>
            <person name="Lin H."/>
            <person name="Quesada-Ocampo L."/>
            <person name="Vaillancourt B."/>
            <person name="Sakai H."/>
            <person name="Lee S.S."/>
            <person name="Kim J."/>
            <person name="Numa H."/>
            <person name="Itoh T."/>
            <person name="Buell C.R."/>
            <person name="Matsumoto T."/>
        </authorList>
    </citation>
    <scope>GENOME REANNOTATION</scope>
    <source>
        <strain>cv. Nipponbare</strain>
    </source>
</reference>
<reference key="5">
    <citation type="journal article" date="2005" name="PLoS Biol.">
        <title>The genomes of Oryza sativa: a history of duplications.</title>
        <authorList>
            <person name="Yu J."/>
            <person name="Wang J."/>
            <person name="Lin W."/>
            <person name="Li S."/>
            <person name="Li H."/>
            <person name="Zhou J."/>
            <person name="Ni P."/>
            <person name="Dong W."/>
            <person name="Hu S."/>
            <person name="Zeng C."/>
            <person name="Zhang J."/>
            <person name="Zhang Y."/>
            <person name="Li R."/>
            <person name="Xu Z."/>
            <person name="Li S."/>
            <person name="Li X."/>
            <person name="Zheng H."/>
            <person name="Cong L."/>
            <person name="Lin L."/>
            <person name="Yin J."/>
            <person name="Geng J."/>
            <person name="Li G."/>
            <person name="Shi J."/>
            <person name="Liu J."/>
            <person name="Lv H."/>
            <person name="Li J."/>
            <person name="Wang J."/>
            <person name="Deng Y."/>
            <person name="Ran L."/>
            <person name="Shi X."/>
            <person name="Wang X."/>
            <person name="Wu Q."/>
            <person name="Li C."/>
            <person name="Ren X."/>
            <person name="Wang J."/>
            <person name="Wang X."/>
            <person name="Li D."/>
            <person name="Liu D."/>
            <person name="Zhang X."/>
            <person name="Ji Z."/>
            <person name="Zhao W."/>
            <person name="Sun Y."/>
            <person name="Zhang Z."/>
            <person name="Bao J."/>
            <person name="Han Y."/>
            <person name="Dong L."/>
            <person name="Ji J."/>
            <person name="Chen P."/>
            <person name="Wu S."/>
            <person name="Liu J."/>
            <person name="Xiao Y."/>
            <person name="Bu D."/>
            <person name="Tan J."/>
            <person name="Yang L."/>
            <person name="Ye C."/>
            <person name="Zhang J."/>
            <person name="Xu J."/>
            <person name="Zhou Y."/>
            <person name="Yu Y."/>
            <person name="Zhang B."/>
            <person name="Zhuang S."/>
            <person name="Wei H."/>
            <person name="Liu B."/>
            <person name="Lei M."/>
            <person name="Yu H."/>
            <person name="Li Y."/>
            <person name="Xu H."/>
            <person name="Wei S."/>
            <person name="He X."/>
            <person name="Fang L."/>
            <person name="Zhang Z."/>
            <person name="Zhang Y."/>
            <person name="Huang X."/>
            <person name="Su Z."/>
            <person name="Tong W."/>
            <person name="Li J."/>
            <person name="Tong Z."/>
            <person name="Li S."/>
            <person name="Ye J."/>
            <person name="Wang L."/>
            <person name="Fang L."/>
            <person name="Lei T."/>
            <person name="Chen C.-S."/>
            <person name="Chen H.-C."/>
            <person name="Xu Z."/>
            <person name="Li H."/>
            <person name="Huang H."/>
            <person name="Zhang F."/>
            <person name="Xu H."/>
            <person name="Li N."/>
            <person name="Zhao C."/>
            <person name="Li S."/>
            <person name="Dong L."/>
            <person name="Huang Y."/>
            <person name="Li L."/>
            <person name="Xi Y."/>
            <person name="Qi Q."/>
            <person name="Li W."/>
            <person name="Zhang B."/>
            <person name="Hu W."/>
            <person name="Zhang Y."/>
            <person name="Tian X."/>
            <person name="Jiao Y."/>
            <person name="Liang X."/>
            <person name="Jin J."/>
            <person name="Gao L."/>
            <person name="Zheng W."/>
            <person name="Hao B."/>
            <person name="Liu S.-M."/>
            <person name="Wang W."/>
            <person name="Yuan L."/>
            <person name="Cao M."/>
            <person name="McDermott J."/>
            <person name="Samudrala R."/>
            <person name="Wang J."/>
            <person name="Wong G.K.-S."/>
            <person name="Yang H."/>
        </authorList>
    </citation>
    <scope>NUCLEOTIDE SEQUENCE [LARGE SCALE GENOMIC DNA]</scope>
    <source>
        <strain>cv. Nipponbare</strain>
    </source>
</reference>
<reference key="6">
    <citation type="journal article" date="2003" name="Science">
        <title>Collection, mapping, and annotation of over 28,000 cDNA clones from japonica rice.</title>
        <authorList>
            <consortium name="The rice full-length cDNA consortium"/>
        </authorList>
    </citation>
    <scope>NUCLEOTIDE SEQUENCE [LARGE SCALE MRNA]</scope>
    <source>
        <strain>cv. Nipponbare</strain>
    </source>
</reference>